<reference key="1">
    <citation type="journal article" date="1996" name="Microbiology">
        <title>Sequence analysis of the Bacillus subtilis chromosome region between the serA and kdg loci cloned in a yeast artificial chromosome.</title>
        <authorList>
            <person name="Sorokin A.V."/>
            <person name="Azevedo V."/>
            <person name="Zumstein E."/>
            <person name="Galleron N."/>
            <person name="Ehrlich S.D."/>
            <person name="Serror P."/>
        </authorList>
    </citation>
    <scope>NUCLEOTIDE SEQUENCE [GENOMIC DNA]</scope>
    <source>
        <strain>168 / Marburg / ATCC 6051 / DSM 10 / JCM 1465 / NBRC 13719 / NCIMB 3610 / NRRL NRS-744 / VKM B-501</strain>
    </source>
</reference>
<reference key="2">
    <citation type="journal article" date="1997" name="Nature">
        <title>The complete genome sequence of the Gram-positive bacterium Bacillus subtilis.</title>
        <authorList>
            <person name="Kunst F."/>
            <person name="Ogasawara N."/>
            <person name="Moszer I."/>
            <person name="Albertini A.M."/>
            <person name="Alloni G."/>
            <person name="Azevedo V."/>
            <person name="Bertero M.G."/>
            <person name="Bessieres P."/>
            <person name="Bolotin A."/>
            <person name="Borchert S."/>
            <person name="Borriss R."/>
            <person name="Boursier L."/>
            <person name="Brans A."/>
            <person name="Braun M."/>
            <person name="Brignell S.C."/>
            <person name="Bron S."/>
            <person name="Brouillet S."/>
            <person name="Bruschi C.V."/>
            <person name="Caldwell B."/>
            <person name="Capuano V."/>
            <person name="Carter N.M."/>
            <person name="Choi S.-K."/>
            <person name="Codani J.-J."/>
            <person name="Connerton I.F."/>
            <person name="Cummings N.J."/>
            <person name="Daniel R.A."/>
            <person name="Denizot F."/>
            <person name="Devine K.M."/>
            <person name="Duesterhoeft A."/>
            <person name="Ehrlich S.D."/>
            <person name="Emmerson P.T."/>
            <person name="Entian K.-D."/>
            <person name="Errington J."/>
            <person name="Fabret C."/>
            <person name="Ferrari E."/>
            <person name="Foulger D."/>
            <person name="Fritz C."/>
            <person name="Fujita M."/>
            <person name="Fujita Y."/>
            <person name="Fuma S."/>
            <person name="Galizzi A."/>
            <person name="Galleron N."/>
            <person name="Ghim S.-Y."/>
            <person name="Glaser P."/>
            <person name="Goffeau A."/>
            <person name="Golightly E.J."/>
            <person name="Grandi G."/>
            <person name="Guiseppi G."/>
            <person name="Guy B.J."/>
            <person name="Haga K."/>
            <person name="Haiech J."/>
            <person name="Harwood C.R."/>
            <person name="Henaut A."/>
            <person name="Hilbert H."/>
            <person name="Holsappel S."/>
            <person name="Hosono S."/>
            <person name="Hullo M.-F."/>
            <person name="Itaya M."/>
            <person name="Jones L.-M."/>
            <person name="Joris B."/>
            <person name="Karamata D."/>
            <person name="Kasahara Y."/>
            <person name="Klaerr-Blanchard M."/>
            <person name="Klein C."/>
            <person name="Kobayashi Y."/>
            <person name="Koetter P."/>
            <person name="Koningstein G."/>
            <person name="Krogh S."/>
            <person name="Kumano M."/>
            <person name="Kurita K."/>
            <person name="Lapidus A."/>
            <person name="Lardinois S."/>
            <person name="Lauber J."/>
            <person name="Lazarevic V."/>
            <person name="Lee S.-M."/>
            <person name="Levine A."/>
            <person name="Liu H."/>
            <person name="Masuda S."/>
            <person name="Mauel C."/>
            <person name="Medigue C."/>
            <person name="Medina N."/>
            <person name="Mellado R.P."/>
            <person name="Mizuno M."/>
            <person name="Moestl D."/>
            <person name="Nakai S."/>
            <person name="Noback M."/>
            <person name="Noone D."/>
            <person name="O'Reilly M."/>
            <person name="Ogawa K."/>
            <person name="Ogiwara A."/>
            <person name="Oudega B."/>
            <person name="Park S.-H."/>
            <person name="Parro V."/>
            <person name="Pohl T.M."/>
            <person name="Portetelle D."/>
            <person name="Porwollik S."/>
            <person name="Prescott A.M."/>
            <person name="Presecan E."/>
            <person name="Pujic P."/>
            <person name="Purnelle B."/>
            <person name="Rapoport G."/>
            <person name="Rey M."/>
            <person name="Reynolds S."/>
            <person name="Rieger M."/>
            <person name="Rivolta C."/>
            <person name="Rocha E."/>
            <person name="Roche B."/>
            <person name="Rose M."/>
            <person name="Sadaie Y."/>
            <person name="Sato T."/>
            <person name="Scanlan E."/>
            <person name="Schleich S."/>
            <person name="Schroeter R."/>
            <person name="Scoffone F."/>
            <person name="Sekiguchi J."/>
            <person name="Sekowska A."/>
            <person name="Seror S.J."/>
            <person name="Serror P."/>
            <person name="Shin B.-S."/>
            <person name="Soldo B."/>
            <person name="Sorokin A."/>
            <person name="Tacconi E."/>
            <person name="Takagi T."/>
            <person name="Takahashi H."/>
            <person name="Takemaru K."/>
            <person name="Takeuchi M."/>
            <person name="Tamakoshi A."/>
            <person name="Tanaka T."/>
            <person name="Terpstra P."/>
            <person name="Tognoni A."/>
            <person name="Tosato V."/>
            <person name="Uchiyama S."/>
            <person name="Vandenbol M."/>
            <person name="Vannier F."/>
            <person name="Vassarotti A."/>
            <person name="Viari A."/>
            <person name="Wambutt R."/>
            <person name="Wedler E."/>
            <person name="Wedler H."/>
            <person name="Weitzenegger T."/>
            <person name="Winters P."/>
            <person name="Wipat A."/>
            <person name="Yamamoto H."/>
            <person name="Yamane K."/>
            <person name="Yasumoto K."/>
            <person name="Yata K."/>
            <person name="Yoshida K."/>
            <person name="Yoshikawa H.-F."/>
            <person name="Zumstein E."/>
            <person name="Yoshikawa H."/>
            <person name="Danchin A."/>
        </authorList>
    </citation>
    <scope>NUCLEOTIDE SEQUENCE [LARGE SCALE GENOMIC DNA]</scope>
    <source>
        <strain>168</strain>
    </source>
</reference>
<gene>
    <name type="primary">yphA</name>
    <name type="ordered locus">BSU22860</name>
</gene>
<accession>P50741</accession>
<sequence length="199" mass="22966">MEQFYYYWSMWFLWVLTTFIFEKTKRRIAVSVFILTNIILSIHDIALYFSLNAAYLMFFVCGCVYAGYLGMYRFRYIMVYLTLVAAYAFVYLFALYDPVWFIIKPEWAAVILIVLLTASVERNFEKQLVLFVLGMCQGELVYSFVIQKLAGAMAVGGFQWLNACSAGMILLFGISKYEHLASQIGQKSKRSNKGATKMS</sequence>
<organism>
    <name type="scientific">Bacillus subtilis (strain 168)</name>
    <dbReference type="NCBI Taxonomy" id="224308"/>
    <lineage>
        <taxon>Bacteria</taxon>
        <taxon>Bacillati</taxon>
        <taxon>Bacillota</taxon>
        <taxon>Bacilli</taxon>
        <taxon>Bacillales</taxon>
        <taxon>Bacillaceae</taxon>
        <taxon>Bacillus</taxon>
    </lineage>
</organism>
<proteinExistence type="predicted"/>
<dbReference type="EMBL" id="L47648">
    <property type="protein sequence ID" value="AAC83964.1"/>
    <property type="molecule type" value="Genomic_DNA"/>
</dbReference>
<dbReference type="EMBL" id="AL009126">
    <property type="protein sequence ID" value="CAB14202.1"/>
    <property type="molecule type" value="Genomic_DNA"/>
</dbReference>
<dbReference type="PIR" id="G69935">
    <property type="entry name" value="G69935"/>
</dbReference>
<dbReference type="RefSeq" id="NP_390167.1">
    <property type="nucleotide sequence ID" value="NC_000964.3"/>
</dbReference>
<dbReference type="RefSeq" id="WP_003230560.1">
    <property type="nucleotide sequence ID" value="NZ_OZ025638.1"/>
</dbReference>
<dbReference type="FunCoup" id="P50741">
    <property type="interactions" value="5"/>
</dbReference>
<dbReference type="STRING" id="224308.BSU22860"/>
<dbReference type="PaxDb" id="224308-BSU22860"/>
<dbReference type="EnsemblBacteria" id="CAB14202">
    <property type="protein sequence ID" value="CAB14202"/>
    <property type="gene ID" value="BSU_22860"/>
</dbReference>
<dbReference type="GeneID" id="938987"/>
<dbReference type="KEGG" id="bsu:BSU22860"/>
<dbReference type="PATRIC" id="fig|224308.179.peg.2492"/>
<dbReference type="eggNOG" id="ENOG5032TN5">
    <property type="taxonomic scope" value="Bacteria"/>
</dbReference>
<dbReference type="InParanoid" id="P50741"/>
<dbReference type="OrthoDB" id="2965169at2"/>
<dbReference type="BioCyc" id="BSUB:BSU22860-MONOMER"/>
<dbReference type="Proteomes" id="UP000001570">
    <property type="component" value="Chromosome"/>
</dbReference>
<dbReference type="GO" id="GO:0005886">
    <property type="term" value="C:plasma membrane"/>
    <property type="evidence" value="ECO:0007669"/>
    <property type="project" value="UniProtKB-SubCell"/>
</dbReference>
<dbReference type="InterPro" id="IPR014617">
    <property type="entry name" value="YphA_Bacsu"/>
</dbReference>
<dbReference type="Pfam" id="PF24124">
    <property type="entry name" value="YphA"/>
    <property type="match status" value="1"/>
</dbReference>
<dbReference type="PIRSF" id="PIRSF036710">
    <property type="entry name" value="YphA_Bacsu"/>
    <property type="match status" value="1"/>
</dbReference>
<keyword id="KW-1003">Cell membrane</keyword>
<keyword id="KW-0472">Membrane</keyword>
<keyword id="KW-1185">Reference proteome</keyword>
<keyword id="KW-0812">Transmembrane</keyword>
<keyword id="KW-1133">Transmembrane helix</keyword>
<evidence type="ECO:0000255" key="1"/>
<evidence type="ECO:0000305" key="2"/>
<protein>
    <recommendedName>
        <fullName>Uncharacterized protein YphA</fullName>
    </recommendedName>
</protein>
<name>YPHA_BACSU</name>
<feature type="chain" id="PRO_0000049694" description="Uncharacterized protein YphA">
    <location>
        <begin position="1"/>
        <end position="199"/>
    </location>
</feature>
<feature type="transmembrane region" description="Helical" evidence="1">
    <location>
        <begin position="1"/>
        <end position="21"/>
    </location>
</feature>
<feature type="transmembrane region" description="Helical" evidence="1">
    <location>
        <begin position="28"/>
        <end position="48"/>
    </location>
</feature>
<feature type="transmembrane region" description="Helical" evidence="1">
    <location>
        <begin position="51"/>
        <end position="71"/>
    </location>
</feature>
<feature type="transmembrane region" description="Helical" evidence="1">
    <location>
        <begin position="83"/>
        <end position="103"/>
    </location>
</feature>
<feature type="transmembrane region" description="Helical" evidence="1">
    <location>
        <begin position="127"/>
        <end position="147"/>
    </location>
</feature>
<feature type="transmembrane region" description="Helical" evidence="1">
    <location>
        <begin position="154"/>
        <end position="174"/>
    </location>
</feature>
<comment type="subcellular location">
    <subcellularLocation>
        <location evidence="2">Cell membrane</location>
        <topology evidence="2">Multi-pass membrane protein</topology>
    </subcellularLocation>
</comment>